<keyword id="KW-0249">Electron transport</keyword>
<keyword id="KW-0349">Heme</keyword>
<keyword id="KW-0408">Iron</keyword>
<keyword id="KW-0443">Lipid metabolism</keyword>
<keyword id="KW-0472">Membrane</keyword>
<keyword id="KW-0479">Metal-binding</keyword>
<keyword id="KW-0560">Oxidoreductase</keyword>
<keyword id="KW-1185">Reference proteome</keyword>
<keyword id="KW-0746">Sphingolipid metabolism</keyword>
<keyword id="KW-0812">Transmembrane</keyword>
<keyword id="KW-1133">Transmembrane helix</keyword>
<keyword id="KW-0813">Transport</keyword>
<organism>
    <name type="scientific">Thalassiosira pseudonana</name>
    <name type="common">Marine diatom</name>
    <name type="synonym">Cyclotella nana</name>
    <dbReference type="NCBI Taxonomy" id="35128"/>
    <lineage>
        <taxon>Eukaryota</taxon>
        <taxon>Sar</taxon>
        <taxon>Stramenopiles</taxon>
        <taxon>Ochrophyta</taxon>
        <taxon>Bacillariophyta</taxon>
        <taxon>Coscinodiscophyceae</taxon>
        <taxon>Thalassiosirophycidae</taxon>
        <taxon>Thalassiosirales</taxon>
        <taxon>Thalassiosiraceae</taxon>
        <taxon>Thalassiosira</taxon>
    </lineage>
</organism>
<reference key="1">
    <citation type="journal article" date="2005" name="FEBS J.">
        <title>Fatty acid desaturases from the microalga Thalassiosira pseudonana.</title>
        <authorList>
            <person name="Tonon T."/>
            <person name="Sayanova O."/>
            <person name="Michaelson L.V."/>
            <person name="Qing R."/>
            <person name="Harvey D."/>
            <person name="Larson T.R."/>
            <person name="Li Y."/>
            <person name="Napier J.A."/>
            <person name="Graham I.A."/>
        </authorList>
    </citation>
    <scope>NUCLEOTIDE SEQUENCE [MRNA]</scope>
</reference>
<reference key="2">
    <citation type="journal article" date="2004" name="Science">
        <title>The genome of the diatom Thalassiosira pseudonana: ecology, evolution, and metabolism.</title>
        <authorList>
            <person name="Armbrust E.V."/>
            <person name="Berges J.A."/>
            <person name="Bowler C."/>
            <person name="Green B.R."/>
            <person name="Martinez D."/>
            <person name="Putnam N.H."/>
            <person name="Zhou S."/>
            <person name="Allen A.E."/>
            <person name="Apt K.E."/>
            <person name="Bechner M."/>
            <person name="Brzezinski M.A."/>
            <person name="Chaal B.K."/>
            <person name="Chiovitti A."/>
            <person name="Davis A.K."/>
            <person name="Demarest M.S."/>
            <person name="Detter J.C."/>
            <person name="Glavina T."/>
            <person name="Goodstein D."/>
            <person name="Hadi M.Z."/>
            <person name="Hellsten U."/>
            <person name="Hildebrand M."/>
            <person name="Jenkins B.D."/>
            <person name="Jurka J."/>
            <person name="Kapitonov V.V."/>
            <person name="Kroger N."/>
            <person name="Lau W.W."/>
            <person name="Lane T.W."/>
            <person name="Larimer F.W."/>
            <person name="Lippmeier J.C."/>
            <person name="Lucas S."/>
            <person name="Medina M."/>
            <person name="Montsant A."/>
            <person name="Obornik M."/>
            <person name="Parker M.S."/>
            <person name="Palenik B."/>
            <person name="Pazour G.J."/>
            <person name="Richardson P.M."/>
            <person name="Rynearson T.A."/>
            <person name="Saito M.A."/>
            <person name="Schwartz D.C."/>
            <person name="Thamatrakoln K."/>
            <person name="Valentin K."/>
            <person name="Vardi A."/>
            <person name="Wilkerson F.P."/>
            <person name="Rokhsar D.S."/>
        </authorList>
    </citation>
    <scope>NUCLEOTIDE SEQUENCE [LARGE SCALE GENOMIC DNA]</scope>
    <source>
        <strain>CCMP1335 / NEPCC58 / CCAP 1085/12</strain>
    </source>
</reference>
<reference key="3">
    <citation type="journal article" date="2013" name="Phytochemistry">
        <title>Identification of a cytochrome b5-fusion desaturase responsible for the synthesis of triunsaturated sphingolipid long chain bases in the marine diatom Thalassiosira pseudonana.</title>
        <authorList>
            <person name="Michaelson L.V."/>
            <person name="Markham J.E."/>
            <person name="Zaeeuner S."/>
            <person name="Matsumoto M."/>
            <person name="Chen M."/>
            <person name="Cahoon E.B."/>
            <person name="Napier J.A."/>
        </authorList>
    </citation>
    <scope>FUNCTION</scope>
    <scope>CATALYTIC ACTIVITY</scope>
</reference>
<dbReference type="EC" id="1.14.19.19" evidence="4"/>
<dbReference type="EMBL" id="AY817153">
    <property type="protein sequence ID" value="AAX14503.1"/>
    <property type="molecule type" value="mRNA"/>
</dbReference>
<dbReference type="EMBL" id="CM000642">
    <property type="protein sequence ID" value="EED92516.1"/>
    <property type="molecule type" value="Genomic_DNA"/>
</dbReference>
<dbReference type="RefSeq" id="XP_002290764.1">
    <property type="nucleotide sequence ID" value="XM_002290728.1"/>
</dbReference>
<dbReference type="SMR" id="Q4G2T3"/>
<dbReference type="STRING" id="35128.Q4G2T3"/>
<dbReference type="PaxDb" id="35128-Thaps22804"/>
<dbReference type="EnsemblProtists" id="EED92516">
    <property type="protein sequence ID" value="EED92516"/>
    <property type="gene ID" value="THAPSDRAFT_22804"/>
</dbReference>
<dbReference type="KEGG" id="tps:THAPSDRAFT_22804"/>
<dbReference type="eggNOG" id="KOG4232">
    <property type="taxonomic scope" value="Eukaryota"/>
</dbReference>
<dbReference type="HOGENOM" id="CLU_016265_1_1_1"/>
<dbReference type="InParanoid" id="Q4G2T3"/>
<dbReference type="OMA" id="CWIVIND"/>
<dbReference type="BioCyc" id="MetaCyc:MONOMER-19157"/>
<dbReference type="BRENDA" id="1.14.19.19">
    <property type="organism ID" value="6253"/>
</dbReference>
<dbReference type="UniPathway" id="UPA00222"/>
<dbReference type="Proteomes" id="UP000001449">
    <property type="component" value="Chromosome 5"/>
</dbReference>
<dbReference type="GO" id="GO:0016020">
    <property type="term" value="C:membrane"/>
    <property type="evidence" value="ECO:0007669"/>
    <property type="project" value="UniProtKB-SubCell"/>
</dbReference>
<dbReference type="GO" id="GO:0020037">
    <property type="term" value="F:heme binding"/>
    <property type="evidence" value="ECO:0007669"/>
    <property type="project" value="InterPro"/>
</dbReference>
<dbReference type="GO" id="GO:0046872">
    <property type="term" value="F:metal ion binding"/>
    <property type="evidence" value="ECO:0007669"/>
    <property type="project" value="UniProtKB-KW"/>
</dbReference>
<dbReference type="GO" id="GO:0016717">
    <property type="term" value="F:oxidoreductase activity, acting on paired donors, with oxidation of a pair of donors resulting in the reduction of molecular oxygen to two molecules of water"/>
    <property type="evidence" value="ECO:0000314"/>
    <property type="project" value="UniProtKB"/>
</dbReference>
<dbReference type="GO" id="GO:0006629">
    <property type="term" value="P:lipid metabolic process"/>
    <property type="evidence" value="ECO:0000318"/>
    <property type="project" value="GO_Central"/>
</dbReference>
<dbReference type="GO" id="GO:0030148">
    <property type="term" value="P:sphingolipid biosynthetic process"/>
    <property type="evidence" value="ECO:0000314"/>
    <property type="project" value="UniProtKB"/>
</dbReference>
<dbReference type="CDD" id="cd03506">
    <property type="entry name" value="Delta6-FADS-like"/>
    <property type="match status" value="1"/>
</dbReference>
<dbReference type="Gene3D" id="3.10.120.10">
    <property type="entry name" value="Cytochrome b5-like heme/steroid binding domain"/>
    <property type="match status" value="1"/>
</dbReference>
<dbReference type="InterPro" id="IPR001199">
    <property type="entry name" value="Cyt_B5-like_heme/steroid-bd"/>
</dbReference>
<dbReference type="InterPro" id="IPR036400">
    <property type="entry name" value="Cyt_B5-like_heme/steroid_sf"/>
</dbReference>
<dbReference type="InterPro" id="IPR018506">
    <property type="entry name" value="Cyt_B5_heme-BS"/>
</dbReference>
<dbReference type="InterPro" id="IPR005804">
    <property type="entry name" value="FA_desaturase_dom"/>
</dbReference>
<dbReference type="InterPro" id="IPR012171">
    <property type="entry name" value="Fatty_acid_desaturase"/>
</dbReference>
<dbReference type="PANTHER" id="PTHR19353:SF88">
    <property type="entry name" value="DELTA(5) FATTY ACID DESATURASE FAT-4"/>
    <property type="match status" value="1"/>
</dbReference>
<dbReference type="PANTHER" id="PTHR19353">
    <property type="entry name" value="FATTY ACID DESATURASE 2"/>
    <property type="match status" value="1"/>
</dbReference>
<dbReference type="Pfam" id="PF00173">
    <property type="entry name" value="Cyt-b5"/>
    <property type="match status" value="1"/>
</dbReference>
<dbReference type="Pfam" id="PF00487">
    <property type="entry name" value="FA_desaturase"/>
    <property type="match status" value="1"/>
</dbReference>
<dbReference type="PIRSF" id="PIRSF015921">
    <property type="entry name" value="FA_sphinglp_des"/>
    <property type="match status" value="1"/>
</dbReference>
<dbReference type="SUPFAM" id="SSF55856">
    <property type="entry name" value="Cytochrome b5-like heme/steroid binding domain"/>
    <property type="match status" value="1"/>
</dbReference>
<dbReference type="PROSITE" id="PS00191">
    <property type="entry name" value="CYTOCHROME_B5_1"/>
    <property type="match status" value="1"/>
</dbReference>
<dbReference type="PROSITE" id="PS50255">
    <property type="entry name" value="CYTOCHROME_B5_2"/>
    <property type="match status" value="1"/>
</dbReference>
<gene>
    <name evidence="7" type="primary">desA</name>
    <name evidence="8" type="ORF">THAPS_22804</name>
</gene>
<sequence>MRAVWALLWALQLGTLVGCALVLGVHHFSGDNLTKQSAIPTKSSKAKPISDQKAAVTSGSTCAVREKARKDGLVLLDGNWYNVEKFVHHHPGGVEVLEQYLGADISFVFRVMHRNPTQIMKYRKPVRAATPEELEALTSRRQEVCLDMMDDFVTNSIDIASPEMLPKPTQFDLKSFEKDFIDLYEEFVAQGYFKPSTTWLLWNTAVLISIIALSVISMKVLPPTSFVLPGALLGLFWHQSGFLMHDAEHHNLAGNERLNDILGWIYGTVFLGVNGAWWREEHREHHAFLNTYDDESGFKDPQMREDVWIQNKKLIPFFGDEIIHFLTNFQHILFLPIIFIVGRVGIVVDSTLTERKFRPWTILGNVCHILLHYAILSQTSRPIPVYIIGSLWQAILSLQLLGNHYVKPWNRLNDATEGNFCVWQILSTQDFACPRWSRWLYGGLNFHYSHHLFPTLSREYFHITSPRIRTLCEKHGLPFIEIAFIDCVVGMVNNFNEVRKDFATKGHGSVAFMYT</sequence>
<name>DESAT_THAPS</name>
<accession>Q4G2T3</accession>
<accession>B8C381</accession>
<feature type="chain" id="PRO_5004238894" description="Sphingolipid 10-desaturase" evidence="2">
    <location>
        <begin position="1"/>
        <end position="515"/>
    </location>
</feature>
<feature type="transmembrane region" description="Helical" evidence="2">
    <location>
        <begin position="3"/>
        <end position="23"/>
    </location>
</feature>
<feature type="transmembrane region" description="Helical" evidence="2">
    <location>
        <begin position="198"/>
        <end position="218"/>
    </location>
</feature>
<feature type="transmembrane region" description="Helical" evidence="2">
    <location>
        <begin position="258"/>
        <end position="278"/>
    </location>
</feature>
<feature type="transmembrane region" description="Helical" evidence="2">
    <location>
        <begin position="322"/>
        <end position="342"/>
    </location>
</feature>
<feature type="transmembrane region" description="Helical" evidence="2">
    <location>
        <begin position="359"/>
        <end position="379"/>
    </location>
</feature>
<feature type="transmembrane region" description="Helical" evidence="2">
    <location>
        <begin position="382"/>
        <end position="402"/>
    </location>
</feature>
<feature type="domain" description="Cytochrome b5 heme-binding" evidence="3">
    <location>
        <begin position="46"/>
        <end position="113"/>
    </location>
</feature>
<feature type="short sequence motif" description="Histidine box-1" evidence="6">
    <location>
        <begin position="245"/>
        <end position="249"/>
    </location>
</feature>
<feature type="short sequence motif" description="Histidine box-2" evidence="6">
    <location>
        <begin position="281"/>
        <end position="286"/>
    </location>
</feature>
<feature type="short sequence motif" description="Histidine box-3" evidence="6">
    <location>
        <begin position="447"/>
        <end position="451"/>
    </location>
</feature>
<feature type="binding site" description="axial binding residue" evidence="3">
    <location>
        <position position="90"/>
    </location>
    <ligand>
        <name>heme</name>
        <dbReference type="ChEBI" id="CHEBI:30413"/>
    </ligand>
    <ligandPart>
        <name>Fe</name>
        <dbReference type="ChEBI" id="CHEBI:18248"/>
    </ligandPart>
</feature>
<feature type="binding site" description="axial binding residue" evidence="3">
    <location>
        <position position="113"/>
    </location>
    <ligand>
        <name>heme</name>
        <dbReference type="ChEBI" id="CHEBI:30413"/>
    </ligand>
    <ligandPart>
        <name>Fe</name>
        <dbReference type="ChEBI" id="CHEBI:18248"/>
    </ligandPart>
</feature>
<feature type="sequence conflict" description="In Ref. 1; AAX14503." ref="1">
    <original>T</original>
    <variation>R</variation>
    <location>
        <position position="470"/>
    </location>
</feature>
<comment type="function">
    <text evidence="4">Fatty acid desaturase that catalyzes the introduction of the third double bond at the Delta(10) position in d18:3Delta4,8,10 triunsaturated sphingolipid long fatty acid chains. The cytochrome b5 domain probably acts as the direct electron donor to the active site of the desaturase.</text>
</comment>
<comment type="catalytic activity">
    <reaction evidence="4">
        <text>a (4E,8E)-4-sphinga-4,8-dienine ceramide + 2 Fe(II)-[cytochrome b5] + O2 + 2 H(+) = an N-acyl-(4E,8E,10E)-sphingatrienine + 2 Fe(III)-[cytochrome b5] + 2 H2O</text>
        <dbReference type="Rhea" id="RHEA:46548"/>
        <dbReference type="Rhea" id="RHEA-COMP:10438"/>
        <dbReference type="Rhea" id="RHEA-COMP:10439"/>
        <dbReference type="ChEBI" id="CHEBI:15377"/>
        <dbReference type="ChEBI" id="CHEBI:15378"/>
        <dbReference type="ChEBI" id="CHEBI:15379"/>
        <dbReference type="ChEBI" id="CHEBI:29033"/>
        <dbReference type="ChEBI" id="CHEBI:29034"/>
        <dbReference type="ChEBI" id="CHEBI:85953"/>
        <dbReference type="ChEBI" id="CHEBI:86294"/>
        <dbReference type="EC" id="1.14.19.19"/>
    </reaction>
</comment>
<comment type="cofactor">
    <cofactor evidence="1">
        <name>Fe(2+)</name>
        <dbReference type="ChEBI" id="CHEBI:29033"/>
    </cofactor>
</comment>
<comment type="pathway">
    <text evidence="6">Lipid metabolism; sphingolipid metabolism.</text>
</comment>
<comment type="subcellular location">
    <subcellularLocation>
        <location evidence="2">Membrane</location>
        <topology evidence="2">Multi-pass membrane protein</topology>
    </subcellularLocation>
</comment>
<comment type="domain">
    <text evidence="6">The histidine box domains may contain the active site and/or be involved in metal ion binding.</text>
</comment>
<comment type="similarity">
    <text evidence="6">Belongs to the fatty acid desaturase type 1 family.</text>
</comment>
<protein>
    <recommendedName>
        <fullName>Sphingolipid 10-desaturase</fullName>
        <ecNumber evidence="4">1.14.19.19</ecNumber>
    </recommendedName>
    <alternativeName>
        <fullName evidence="5">Fatty acid desaturase A</fullName>
        <shortName evidence="5">TpdesA</shortName>
    </alternativeName>
</protein>
<proteinExistence type="evidence at protein level"/>
<evidence type="ECO:0000250" key="1">
    <source>
        <dbReference type="UniProtKB" id="O00767"/>
    </source>
</evidence>
<evidence type="ECO:0000255" key="2"/>
<evidence type="ECO:0000255" key="3">
    <source>
        <dbReference type="PROSITE-ProRule" id="PRU00279"/>
    </source>
</evidence>
<evidence type="ECO:0000269" key="4">
    <source>
    </source>
</evidence>
<evidence type="ECO:0000303" key="5">
    <source>
    </source>
</evidence>
<evidence type="ECO:0000305" key="6"/>
<evidence type="ECO:0000312" key="7">
    <source>
        <dbReference type="EMBL" id="AAX14503.1"/>
    </source>
</evidence>
<evidence type="ECO:0000312" key="8">
    <source>
        <dbReference type="EMBL" id="EED92516.1"/>
    </source>
</evidence>